<organism>
    <name type="scientific">Burkholderia pseudomallei (strain K96243)</name>
    <dbReference type="NCBI Taxonomy" id="272560"/>
    <lineage>
        <taxon>Bacteria</taxon>
        <taxon>Pseudomonadati</taxon>
        <taxon>Pseudomonadota</taxon>
        <taxon>Betaproteobacteria</taxon>
        <taxon>Burkholderiales</taxon>
        <taxon>Burkholderiaceae</taxon>
        <taxon>Burkholderia</taxon>
        <taxon>pseudomallei group</taxon>
    </lineage>
</organism>
<accession>Q63QM1</accession>
<reference key="1">
    <citation type="journal article" date="2004" name="Proc. Natl. Acad. Sci. U.S.A.">
        <title>Genomic plasticity of the causative agent of melioidosis, Burkholderia pseudomallei.</title>
        <authorList>
            <person name="Holden M.T.G."/>
            <person name="Titball R.W."/>
            <person name="Peacock S.J."/>
            <person name="Cerdeno-Tarraga A.-M."/>
            <person name="Atkins T."/>
            <person name="Crossman L.C."/>
            <person name="Pitt T."/>
            <person name="Churcher C."/>
            <person name="Mungall K.L."/>
            <person name="Bentley S.D."/>
            <person name="Sebaihia M."/>
            <person name="Thomson N.R."/>
            <person name="Bason N."/>
            <person name="Beacham I.R."/>
            <person name="Brooks K."/>
            <person name="Brown K.A."/>
            <person name="Brown N.F."/>
            <person name="Challis G.L."/>
            <person name="Cherevach I."/>
            <person name="Chillingworth T."/>
            <person name="Cronin A."/>
            <person name="Crossett B."/>
            <person name="Davis P."/>
            <person name="DeShazer D."/>
            <person name="Feltwell T."/>
            <person name="Fraser A."/>
            <person name="Hance Z."/>
            <person name="Hauser H."/>
            <person name="Holroyd S."/>
            <person name="Jagels K."/>
            <person name="Keith K.E."/>
            <person name="Maddison M."/>
            <person name="Moule S."/>
            <person name="Price C."/>
            <person name="Quail M.A."/>
            <person name="Rabbinowitsch E."/>
            <person name="Rutherford K."/>
            <person name="Sanders M."/>
            <person name="Simmonds M."/>
            <person name="Songsivilai S."/>
            <person name="Stevens K."/>
            <person name="Tumapa S."/>
            <person name="Vesaratchavest M."/>
            <person name="Whitehead S."/>
            <person name="Yeats C."/>
            <person name="Barrell B.G."/>
            <person name="Oyston P.C.F."/>
            <person name="Parkhill J."/>
        </authorList>
    </citation>
    <scope>NUCLEOTIDE SEQUENCE [LARGE SCALE GENOMIC DNA]</scope>
    <source>
        <strain>K96243</strain>
    </source>
</reference>
<proteinExistence type="inferred from homology"/>
<gene>
    <name evidence="1" type="primary">proB</name>
    <name type="ordered locus">BPSL3002</name>
</gene>
<comment type="function">
    <text evidence="1">Catalyzes the transfer of a phosphate group to glutamate to form L-glutamate 5-phosphate.</text>
</comment>
<comment type="catalytic activity">
    <reaction evidence="1">
        <text>L-glutamate + ATP = L-glutamyl 5-phosphate + ADP</text>
        <dbReference type="Rhea" id="RHEA:14877"/>
        <dbReference type="ChEBI" id="CHEBI:29985"/>
        <dbReference type="ChEBI" id="CHEBI:30616"/>
        <dbReference type="ChEBI" id="CHEBI:58274"/>
        <dbReference type="ChEBI" id="CHEBI:456216"/>
        <dbReference type="EC" id="2.7.2.11"/>
    </reaction>
</comment>
<comment type="pathway">
    <text evidence="1">Amino-acid biosynthesis; L-proline biosynthesis; L-glutamate 5-semialdehyde from L-glutamate: step 1/2.</text>
</comment>
<comment type="subcellular location">
    <subcellularLocation>
        <location evidence="1">Cytoplasm</location>
    </subcellularLocation>
</comment>
<comment type="similarity">
    <text evidence="1">Belongs to the glutamate 5-kinase family.</text>
</comment>
<sequence>MRSIIADSKRLVVKVGSSLVTNDGRGLDHDAIGRWAAQIAALRGAGKEVVLVSSGAIAEGMQRLGWSKRPREIDELQAAAAVGQMGLAQVYESRFAEHGIRTAQILLTHADLADRERYLNARSTLLTLLRLGVVPIINENDTVVTDEIKFGDNDTLGALVANLIEGDTLVILTDQPGLFTADPRKDPGATLVAEASAGAPELEAMAGGAGSSIGRGGMLTKILAAKRAAHSGANTVIASGRERDVLVRLAAGEAIGTQLIARTARMAARKQWMADHLQVRGHVVIDAGAVDKLTAGGKSLLPIGVVAVQGVFARGEVIACVDDTGREVARGITNYSSAETKLIQRKPSGEIETVLGYMLEPELIHRDNLVLV</sequence>
<evidence type="ECO:0000255" key="1">
    <source>
        <dbReference type="HAMAP-Rule" id="MF_00456"/>
    </source>
</evidence>
<feature type="chain" id="PRO_0000109655" description="Glutamate 5-kinase">
    <location>
        <begin position="1"/>
        <end position="372"/>
    </location>
</feature>
<feature type="domain" description="PUA" evidence="1">
    <location>
        <begin position="280"/>
        <end position="358"/>
    </location>
</feature>
<feature type="binding site" evidence="1">
    <location>
        <position position="14"/>
    </location>
    <ligand>
        <name>ATP</name>
        <dbReference type="ChEBI" id="CHEBI:30616"/>
    </ligand>
</feature>
<feature type="binding site" evidence="1">
    <location>
        <position position="54"/>
    </location>
    <ligand>
        <name>substrate</name>
    </ligand>
</feature>
<feature type="binding site" evidence="1">
    <location>
        <position position="141"/>
    </location>
    <ligand>
        <name>substrate</name>
    </ligand>
</feature>
<feature type="binding site" evidence="1">
    <location>
        <position position="153"/>
    </location>
    <ligand>
        <name>substrate</name>
    </ligand>
</feature>
<feature type="binding site" evidence="1">
    <location>
        <begin position="173"/>
        <end position="174"/>
    </location>
    <ligand>
        <name>ATP</name>
        <dbReference type="ChEBI" id="CHEBI:30616"/>
    </ligand>
</feature>
<keyword id="KW-0028">Amino-acid biosynthesis</keyword>
<keyword id="KW-0067">ATP-binding</keyword>
<keyword id="KW-0963">Cytoplasm</keyword>
<keyword id="KW-0418">Kinase</keyword>
<keyword id="KW-0547">Nucleotide-binding</keyword>
<keyword id="KW-0641">Proline biosynthesis</keyword>
<keyword id="KW-1185">Reference proteome</keyword>
<keyword id="KW-0808">Transferase</keyword>
<name>PROB_BURPS</name>
<protein>
    <recommendedName>
        <fullName evidence="1">Glutamate 5-kinase</fullName>
        <ecNumber evidence="1">2.7.2.11</ecNumber>
    </recommendedName>
    <alternativeName>
        <fullName evidence="1">Gamma-glutamyl kinase</fullName>
        <shortName evidence="1">GK</shortName>
    </alternativeName>
</protein>
<dbReference type="EC" id="2.7.2.11" evidence="1"/>
<dbReference type="EMBL" id="BX571965">
    <property type="protein sequence ID" value="CAH37013.1"/>
    <property type="molecule type" value="Genomic_DNA"/>
</dbReference>
<dbReference type="RefSeq" id="WP_004194262.1">
    <property type="nucleotide sequence ID" value="NZ_CP009538.1"/>
</dbReference>
<dbReference type="RefSeq" id="YP_109597.1">
    <property type="nucleotide sequence ID" value="NC_006350.1"/>
</dbReference>
<dbReference type="SMR" id="Q63QM1"/>
<dbReference type="STRING" id="272560.BPSL3002"/>
<dbReference type="GeneID" id="93061602"/>
<dbReference type="KEGG" id="bps:BPSL3002"/>
<dbReference type="PATRIC" id="fig|272560.51.peg.2268"/>
<dbReference type="eggNOG" id="COG0263">
    <property type="taxonomic scope" value="Bacteria"/>
</dbReference>
<dbReference type="UniPathway" id="UPA00098">
    <property type="reaction ID" value="UER00359"/>
</dbReference>
<dbReference type="Proteomes" id="UP000000605">
    <property type="component" value="Chromosome 1"/>
</dbReference>
<dbReference type="GO" id="GO:0005829">
    <property type="term" value="C:cytosol"/>
    <property type="evidence" value="ECO:0007669"/>
    <property type="project" value="TreeGrafter"/>
</dbReference>
<dbReference type="GO" id="GO:0005524">
    <property type="term" value="F:ATP binding"/>
    <property type="evidence" value="ECO:0007669"/>
    <property type="project" value="UniProtKB-KW"/>
</dbReference>
<dbReference type="GO" id="GO:0004349">
    <property type="term" value="F:glutamate 5-kinase activity"/>
    <property type="evidence" value="ECO:0007669"/>
    <property type="project" value="UniProtKB-UniRule"/>
</dbReference>
<dbReference type="GO" id="GO:0003723">
    <property type="term" value="F:RNA binding"/>
    <property type="evidence" value="ECO:0007669"/>
    <property type="project" value="InterPro"/>
</dbReference>
<dbReference type="GO" id="GO:0055129">
    <property type="term" value="P:L-proline biosynthetic process"/>
    <property type="evidence" value="ECO:0007669"/>
    <property type="project" value="UniProtKB-UniRule"/>
</dbReference>
<dbReference type="CDD" id="cd04242">
    <property type="entry name" value="AAK_G5K_ProB"/>
    <property type="match status" value="1"/>
</dbReference>
<dbReference type="CDD" id="cd21157">
    <property type="entry name" value="PUA_G5K"/>
    <property type="match status" value="1"/>
</dbReference>
<dbReference type="FunFam" id="2.30.130.10:FF:000007">
    <property type="entry name" value="Glutamate 5-kinase"/>
    <property type="match status" value="1"/>
</dbReference>
<dbReference type="FunFam" id="3.40.1160.10:FF:000018">
    <property type="entry name" value="Glutamate 5-kinase"/>
    <property type="match status" value="1"/>
</dbReference>
<dbReference type="Gene3D" id="3.40.1160.10">
    <property type="entry name" value="Acetylglutamate kinase-like"/>
    <property type="match status" value="1"/>
</dbReference>
<dbReference type="Gene3D" id="2.30.130.10">
    <property type="entry name" value="PUA domain"/>
    <property type="match status" value="1"/>
</dbReference>
<dbReference type="HAMAP" id="MF_00456">
    <property type="entry name" value="ProB"/>
    <property type="match status" value="1"/>
</dbReference>
<dbReference type="InterPro" id="IPR036393">
    <property type="entry name" value="AceGlu_kinase-like_sf"/>
</dbReference>
<dbReference type="InterPro" id="IPR001048">
    <property type="entry name" value="Asp/Glu/Uridylate_kinase"/>
</dbReference>
<dbReference type="InterPro" id="IPR041739">
    <property type="entry name" value="G5K_ProB"/>
</dbReference>
<dbReference type="InterPro" id="IPR001057">
    <property type="entry name" value="Glu/AcGlu_kinase"/>
</dbReference>
<dbReference type="InterPro" id="IPR011529">
    <property type="entry name" value="Glu_5kinase"/>
</dbReference>
<dbReference type="InterPro" id="IPR005715">
    <property type="entry name" value="Glu_5kinase/COase_Synthase"/>
</dbReference>
<dbReference type="InterPro" id="IPR019797">
    <property type="entry name" value="Glutamate_5-kinase_CS"/>
</dbReference>
<dbReference type="InterPro" id="IPR002478">
    <property type="entry name" value="PUA"/>
</dbReference>
<dbReference type="InterPro" id="IPR015947">
    <property type="entry name" value="PUA-like_sf"/>
</dbReference>
<dbReference type="InterPro" id="IPR036974">
    <property type="entry name" value="PUA_sf"/>
</dbReference>
<dbReference type="NCBIfam" id="TIGR01027">
    <property type="entry name" value="proB"/>
    <property type="match status" value="1"/>
</dbReference>
<dbReference type="PANTHER" id="PTHR43654">
    <property type="entry name" value="GLUTAMATE 5-KINASE"/>
    <property type="match status" value="1"/>
</dbReference>
<dbReference type="PANTHER" id="PTHR43654:SF1">
    <property type="entry name" value="ISOPENTENYL PHOSPHATE KINASE"/>
    <property type="match status" value="1"/>
</dbReference>
<dbReference type="Pfam" id="PF00696">
    <property type="entry name" value="AA_kinase"/>
    <property type="match status" value="1"/>
</dbReference>
<dbReference type="Pfam" id="PF01472">
    <property type="entry name" value="PUA"/>
    <property type="match status" value="1"/>
</dbReference>
<dbReference type="PIRSF" id="PIRSF000729">
    <property type="entry name" value="GK"/>
    <property type="match status" value="1"/>
</dbReference>
<dbReference type="PRINTS" id="PR00474">
    <property type="entry name" value="GLU5KINASE"/>
</dbReference>
<dbReference type="SMART" id="SM00359">
    <property type="entry name" value="PUA"/>
    <property type="match status" value="1"/>
</dbReference>
<dbReference type="SUPFAM" id="SSF53633">
    <property type="entry name" value="Carbamate kinase-like"/>
    <property type="match status" value="1"/>
</dbReference>
<dbReference type="SUPFAM" id="SSF88697">
    <property type="entry name" value="PUA domain-like"/>
    <property type="match status" value="1"/>
</dbReference>
<dbReference type="PROSITE" id="PS00902">
    <property type="entry name" value="GLUTAMATE_5_KINASE"/>
    <property type="match status" value="1"/>
</dbReference>
<dbReference type="PROSITE" id="PS50890">
    <property type="entry name" value="PUA"/>
    <property type="match status" value="1"/>
</dbReference>